<sequence length="365" mass="41432">MNILKISKQTLRNNIKIIREYIGNAKMCFPVKANAYGHGIEDIVENTHDLVDFFAVANSLEAFRVTAVAKNPVLVFGVIYYEYIEKMISENIRVSIQDYEDIEKLEQIAKELDKKVYAHININTGMNRMGVNYNDACRTIQRAYESDWLILEGVYSHLACADNRDHPTNIKQKNRFDSIVKFTKGLSQDIICHLSNSYGFLGQKGICYDMVRPGILSYGFLPEFYVDRVIREIKPIARLLSKVVKIITLQEGEGVGYSLIYRGFEGEQLAVIPIGYGDGFPRELGDRGFVNINDVMYPMAGRMSMDGLTVSLGINEYDVKVGDTVELISAIPRNRNSAFSIAKQTNTIEYDIMSTLNDRIIRKII</sequence>
<comment type="function">
    <text evidence="1">Catalyzes the interconversion of L-alanine and D-alanine. May also act on other amino acids.</text>
</comment>
<comment type="catalytic activity">
    <reaction evidence="1">
        <text>L-alanine = D-alanine</text>
        <dbReference type="Rhea" id="RHEA:20249"/>
        <dbReference type="ChEBI" id="CHEBI:57416"/>
        <dbReference type="ChEBI" id="CHEBI:57972"/>
        <dbReference type="EC" id="5.1.1.1"/>
    </reaction>
</comment>
<comment type="cofactor">
    <cofactor evidence="1">
        <name>pyridoxal 5'-phosphate</name>
        <dbReference type="ChEBI" id="CHEBI:597326"/>
    </cofactor>
</comment>
<comment type="pathway">
    <text evidence="1">Amino-acid biosynthesis; D-alanine biosynthesis; D-alanine from L-alanine: step 1/1.</text>
</comment>
<comment type="similarity">
    <text evidence="1">Belongs to the alanine racemase family.</text>
</comment>
<accession>B2SHB9</accession>
<proteinExistence type="inferred from homology"/>
<dbReference type="EC" id="5.1.1.1" evidence="1"/>
<dbReference type="EMBL" id="CP000915">
    <property type="protein sequence ID" value="ACD31127.1"/>
    <property type="molecule type" value="Genomic_DNA"/>
</dbReference>
<dbReference type="SMR" id="B2SHB9"/>
<dbReference type="KEGG" id="ftm:FTM_1271"/>
<dbReference type="HOGENOM" id="CLU_028393_2_2_6"/>
<dbReference type="UniPathway" id="UPA00042">
    <property type="reaction ID" value="UER00497"/>
</dbReference>
<dbReference type="GO" id="GO:0005829">
    <property type="term" value="C:cytosol"/>
    <property type="evidence" value="ECO:0007669"/>
    <property type="project" value="TreeGrafter"/>
</dbReference>
<dbReference type="GO" id="GO:0008784">
    <property type="term" value="F:alanine racemase activity"/>
    <property type="evidence" value="ECO:0007669"/>
    <property type="project" value="UniProtKB-UniRule"/>
</dbReference>
<dbReference type="GO" id="GO:0030170">
    <property type="term" value="F:pyridoxal phosphate binding"/>
    <property type="evidence" value="ECO:0007669"/>
    <property type="project" value="UniProtKB-UniRule"/>
</dbReference>
<dbReference type="GO" id="GO:0030632">
    <property type="term" value="P:D-alanine biosynthetic process"/>
    <property type="evidence" value="ECO:0007669"/>
    <property type="project" value="UniProtKB-UniRule"/>
</dbReference>
<dbReference type="CDD" id="cd00430">
    <property type="entry name" value="PLPDE_III_AR"/>
    <property type="match status" value="1"/>
</dbReference>
<dbReference type="FunFam" id="3.20.20.10:FF:000002">
    <property type="entry name" value="Alanine racemase"/>
    <property type="match status" value="1"/>
</dbReference>
<dbReference type="Gene3D" id="3.20.20.10">
    <property type="entry name" value="Alanine racemase"/>
    <property type="match status" value="1"/>
</dbReference>
<dbReference type="Gene3D" id="2.40.37.10">
    <property type="entry name" value="Lyase, Ornithine Decarboxylase, Chain A, domain 1"/>
    <property type="match status" value="1"/>
</dbReference>
<dbReference type="HAMAP" id="MF_01201">
    <property type="entry name" value="Ala_racemase"/>
    <property type="match status" value="1"/>
</dbReference>
<dbReference type="InterPro" id="IPR000821">
    <property type="entry name" value="Ala_racemase"/>
</dbReference>
<dbReference type="InterPro" id="IPR009006">
    <property type="entry name" value="Ala_racemase/Decarboxylase_C"/>
</dbReference>
<dbReference type="InterPro" id="IPR011079">
    <property type="entry name" value="Ala_racemase_C"/>
</dbReference>
<dbReference type="InterPro" id="IPR001608">
    <property type="entry name" value="Ala_racemase_N"/>
</dbReference>
<dbReference type="InterPro" id="IPR029066">
    <property type="entry name" value="PLP-binding_barrel"/>
</dbReference>
<dbReference type="NCBIfam" id="TIGR00492">
    <property type="entry name" value="alr"/>
    <property type="match status" value="1"/>
</dbReference>
<dbReference type="PANTHER" id="PTHR30511">
    <property type="entry name" value="ALANINE RACEMASE"/>
    <property type="match status" value="1"/>
</dbReference>
<dbReference type="PANTHER" id="PTHR30511:SF0">
    <property type="entry name" value="ALANINE RACEMASE, CATABOLIC-RELATED"/>
    <property type="match status" value="1"/>
</dbReference>
<dbReference type="Pfam" id="PF00842">
    <property type="entry name" value="Ala_racemase_C"/>
    <property type="match status" value="1"/>
</dbReference>
<dbReference type="Pfam" id="PF01168">
    <property type="entry name" value="Ala_racemase_N"/>
    <property type="match status" value="1"/>
</dbReference>
<dbReference type="PRINTS" id="PR00992">
    <property type="entry name" value="ALARACEMASE"/>
</dbReference>
<dbReference type="SMART" id="SM01005">
    <property type="entry name" value="Ala_racemase_C"/>
    <property type="match status" value="1"/>
</dbReference>
<dbReference type="SUPFAM" id="SSF50621">
    <property type="entry name" value="Alanine racemase C-terminal domain-like"/>
    <property type="match status" value="1"/>
</dbReference>
<dbReference type="SUPFAM" id="SSF51419">
    <property type="entry name" value="PLP-binding barrel"/>
    <property type="match status" value="1"/>
</dbReference>
<gene>
    <name type="primary">alr</name>
    <name type="ordered locus">FTM_1271</name>
</gene>
<evidence type="ECO:0000255" key="1">
    <source>
        <dbReference type="HAMAP-Rule" id="MF_01201"/>
    </source>
</evidence>
<reference key="1">
    <citation type="journal article" date="2009" name="PLoS Pathog.">
        <title>Molecular evolutionary consequences of niche restriction in Francisella tularensis, a facultative intracellular pathogen.</title>
        <authorList>
            <person name="Larsson P."/>
            <person name="Elfsmark D."/>
            <person name="Svensson K."/>
            <person name="Wikstroem P."/>
            <person name="Forsman M."/>
            <person name="Brettin T."/>
            <person name="Keim P."/>
            <person name="Johansson A."/>
        </authorList>
    </citation>
    <scope>NUCLEOTIDE SEQUENCE [LARGE SCALE GENOMIC DNA]</scope>
    <source>
        <strain>FSC147</strain>
    </source>
</reference>
<name>ALR_FRATM</name>
<protein>
    <recommendedName>
        <fullName evidence="1">Alanine racemase</fullName>
        <ecNumber evidence="1">5.1.1.1</ecNumber>
    </recommendedName>
</protein>
<feature type="chain" id="PRO_1000138599" description="Alanine racemase">
    <location>
        <begin position="1"/>
        <end position="365"/>
    </location>
</feature>
<feature type="active site" description="Proton acceptor; specific for D-alanine" evidence="1">
    <location>
        <position position="32"/>
    </location>
</feature>
<feature type="active site" description="Proton acceptor; specific for L-alanine" evidence="1">
    <location>
        <position position="257"/>
    </location>
</feature>
<feature type="binding site" evidence="1">
    <location>
        <position position="128"/>
    </location>
    <ligand>
        <name>substrate</name>
    </ligand>
</feature>
<feature type="binding site" evidence="1">
    <location>
        <position position="305"/>
    </location>
    <ligand>
        <name>substrate</name>
    </ligand>
</feature>
<feature type="modified residue" description="N6-(pyridoxal phosphate)lysine" evidence="1">
    <location>
        <position position="32"/>
    </location>
</feature>
<organism>
    <name type="scientific">Francisella tularensis subsp. mediasiatica (strain FSC147)</name>
    <dbReference type="NCBI Taxonomy" id="441952"/>
    <lineage>
        <taxon>Bacteria</taxon>
        <taxon>Pseudomonadati</taxon>
        <taxon>Pseudomonadota</taxon>
        <taxon>Gammaproteobacteria</taxon>
        <taxon>Thiotrichales</taxon>
        <taxon>Francisellaceae</taxon>
        <taxon>Francisella</taxon>
    </lineage>
</organism>
<keyword id="KW-0413">Isomerase</keyword>
<keyword id="KW-0663">Pyridoxal phosphate</keyword>